<protein>
    <recommendedName>
        <fullName evidence="1">Ribonuclease HII</fullName>
        <shortName evidence="1">RNase HII</shortName>
        <ecNumber evidence="1">3.1.26.4</ecNumber>
    </recommendedName>
</protein>
<accession>A7HQZ3</accession>
<keyword id="KW-0963">Cytoplasm</keyword>
<keyword id="KW-0255">Endonuclease</keyword>
<keyword id="KW-0378">Hydrolase</keyword>
<keyword id="KW-0464">Manganese</keyword>
<keyword id="KW-0479">Metal-binding</keyword>
<keyword id="KW-0540">Nuclease</keyword>
<keyword id="KW-1185">Reference proteome</keyword>
<dbReference type="EC" id="3.1.26.4" evidence="1"/>
<dbReference type="EMBL" id="CP000774">
    <property type="protein sequence ID" value="ABS62326.1"/>
    <property type="molecule type" value="Genomic_DNA"/>
</dbReference>
<dbReference type="SMR" id="A7HQZ3"/>
<dbReference type="STRING" id="402881.Plav_0703"/>
<dbReference type="KEGG" id="pla:Plav_0703"/>
<dbReference type="eggNOG" id="COG0164">
    <property type="taxonomic scope" value="Bacteria"/>
</dbReference>
<dbReference type="HOGENOM" id="CLU_036532_3_2_5"/>
<dbReference type="Proteomes" id="UP000006377">
    <property type="component" value="Chromosome"/>
</dbReference>
<dbReference type="GO" id="GO:0005737">
    <property type="term" value="C:cytoplasm"/>
    <property type="evidence" value="ECO:0007669"/>
    <property type="project" value="UniProtKB-SubCell"/>
</dbReference>
<dbReference type="GO" id="GO:0032299">
    <property type="term" value="C:ribonuclease H2 complex"/>
    <property type="evidence" value="ECO:0007669"/>
    <property type="project" value="TreeGrafter"/>
</dbReference>
<dbReference type="GO" id="GO:0030145">
    <property type="term" value="F:manganese ion binding"/>
    <property type="evidence" value="ECO:0007669"/>
    <property type="project" value="UniProtKB-UniRule"/>
</dbReference>
<dbReference type="GO" id="GO:0003723">
    <property type="term" value="F:RNA binding"/>
    <property type="evidence" value="ECO:0007669"/>
    <property type="project" value="InterPro"/>
</dbReference>
<dbReference type="GO" id="GO:0004523">
    <property type="term" value="F:RNA-DNA hybrid ribonuclease activity"/>
    <property type="evidence" value="ECO:0007669"/>
    <property type="project" value="UniProtKB-UniRule"/>
</dbReference>
<dbReference type="GO" id="GO:0043137">
    <property type="term" value="P:DNA replication, removal of RNA primer"/>
    <property type="evidence" value="ECO:0007669"/>
    <property type="project" value="TreeGrafter"/>
</dbReference>
<dbReference type="GO" id="GO:0006298">
    <property type="term" value="P:mismatch repair"/>
    <property type="evidence" value="ECO:0007669"/>
    <property type="project" value="TreeGrafter"/>
</dbReference>
<dbReference type="CDD" id="cd07182">
    <property type="entry name" value="RNase_HII_bacteria_HII_like"/>
    <property type="match status" value="1"/>
</dbReference>
<dbReference type="FunFam" id="3.30.420.10:FF:000006">
    <property type="entry name" value="Ribonuclease HII"/>
    <property type="match status" value="1"/>
</dbReference>
<dbReference type="Gene3D" id="3.30.420.10">
    <property type="entry name" value="Ribonuclease H-like superfamily/Ribonuclease H"/>
    <property type="match status" value="1"/>
</dbReference>
<dbReference type="HAMAP" id="MF_00052_B">
    <property type="entry name" value="RNase_HII_B"/>
    <property type="match status" value="1"/>
</dbReference>
<dbReference type="InterPro" id="IPR022898">
    <property type="entry name" value="RNase_HII"/>
</dbReference>
<dbReference type="InterPro" id="IPR001352">
    <property type="entry name" value="RNase_HII/HIII"/>
</dbReference>
<dbReference type="InterPro" id="IPR024567">
    <property type="entry name" value="RNase_HII/HIII_dom"/>
</dbReference>
<dbReference type="InterPro" id="IPR012337">
    <property type="entry name" value="RNaseH-like_sf"/>
</dbReference>
<dbReference type="InterPro" id="IPR036397">
    <property type="entry name" value="RNaseH_sf"/>
</dbReference>
<dbReference type="NCBIfam" id="NF000595">
    <property type="entry name" value="PRK00015.1-3"/>
    <property type="match status" value="1"/>
</dbReference>
<dbReference type="PANTHER" id="PTHR10954">
    <property type="entry name" value="RIBONUCLEASE H2 SUBUNIT A"/>
    <property type="match status" value="1"/>
</dbReference>
<dbReference type="PANTHER" id="PTHR10954:SF18">
    <property type="entry name" value="RIBONUCLEASE HII"/>
    <property type="match status" value="1"/>
</dbReference>
<dbReference type="Pfam" id="PF01351">
    <property type="entry name" value="RNase_HII"/>
    <property type="match status" value="1"/>
</dbReference>
<dbReference type="SUPFAM" id="SSF53098">
    <property type="entry name" value="Ribonuclease H-like"/>
    <property type="match status" value="1"/>
</dbReference>
<dbReference type="PROSITE" id="PS51975">
    <property type="entry name" value="RNASE_H_2"/>
    <property type="match status" value="1"/>
</dbReference>
<comment type="function">
    <text evidence="1">Endonuclease that specifically degrades the RNA of RNA-DNA hybrids.</text>
</comment>
<comment type="catalytic activity">
    <reaction evidence="1">
        <text>Endonucleolytic cleavage to 5'-phosphomonoester.</text>
        <dbReference type="EC" id="3.1.26.4"/>
    </reaction>
</comment>
<comment type="cofactor">
    <cofactor evidence="1">
        <name>Mn(2+)</name>
        <dbReference type="ChEBI" id="CHEBI:29035"/>
    </cofactor>
    <cofactor evidence="1">
        <name>Mg(2+)</name>
        <dbReference type="ChEBI" id="CHEBI:18420"/>
    </cofactor>
    <text evidence="1">Manganese or magnesium. Binds 1 divalent metal ion per monomer in the absence of substrate. May bind a second metal ion after substrate binding.</text>
</comment>
<comment type="subcellular location">
    <subcellularLocation>
        <location evidence="1">Cytoplasm</location>
    </subcellularLocation>
</comment>
<comment type="similarity">
    <text evidence="1">Belongs to the RNase HII family.</text>
</comment>
<evidence type="ECO:0000255" key="1">
    <source>
        <dbReference type="HAMAP-Rule" id="MF_00052"/>
    </source>
</evidence>
<evidence type="ECO:0000255" key="2">
    <source>
        <dbReference type="PROSITE-ProRule" id="PRU01319"/>
    </source>
</evidence>
<reference key="1">
    <citation type="journal article" date="2011" name="Stand. Genomic Sci.">
        <title>Complete genome sequence of Parvibaculum lavamentivorans type strain (DS-1(T)).</title>
        <authorList>
            <person name="Schleheck D."/>
            <person name="Weiss M."/>
            <person name="Pitluck S."/>
            <person name="Bruce D."/>
            <person name="Land M.L."/>
            <person name="Han S."/>
            <person name="Saunders E."/>
            <person name="Tapia R."/>
            <person name="Detter C."/>
            <person name="Brettin T."/>
            <person name="Han J."/>
            <person name="Woyke T."/>
            <person name="Goodwin L."/>
            <person name="Pennacchio L."/>
            <person name="Nolan M."/>
            <person name="Cook A.M."/>
            <person name="Kjelleberg S."/>
            <person name="Thomas T."/>
        </authorList>
    </citation>
    <scope>NUCLEOTIDE SEQUENCE [LARGE SCALE GENOMIC DNA]</scope>
    <source>
        <strain>DS-1 / DSM 13023 / NCIMB 13966</strain>
    </source>
</reference>
<proteinExistence type="inferred from homology"/>
<gene>
    <name evidence="1" type="primary">rnhB</name>
    <name type="ordered locus">Plav_0703</name>
</gene>
<sequence length="269" mass="28448">MRPGFSVPGESGRERPAFPLPCACGTLRPMPPPAKKPAQKKKPLPLLPDFRFEIEEGAPARLVCGVDEAGRGPLAGPVVAAAVIIDLTRCPEGLNDSKKLDAARRADLLAELADCAEIGVGIASVEEIDEINILHATMLAMTRAVASLPRAPHIALIDGNRCPPSLACASRAVIGGDALARSIAAASIVAKVTRDRMMAALAETHPGYGFEKHMGYSTPEHFDALSRLGPCAIHRRSFAPVRKMLSPGLEEGLDLVSGESVNLLIQKAY</sequence>
<name>RNH2_PARL1</name>
<organism>
    <name type="scientific">Parvibaculum lavamentivorans (strain DS-1 / DSM 13023 / NCIMB 13966)</name>
    <dbReference type="NCBI Taxonomy" id="402881"/>
    <lineage>
        <taxon>Bacteria</taxon>
        <taxon>Pseudomonadati</taxon>
        <taxon>Pseudomonadota</taxon>
        <taxon>Alphaproteobacteria</taxon>
        <taxon>Hyphomicrobiales</taxon>
        <taxon>Parvibaculaceae</taxon>
        <taxon>Parvibaculum</taxon>
    </lineage>
</organism>
<feature type="chain" id="PRO_0000334931" description="Ribonuclease HII">
    <location>
        <begin position="1"/>
        <end position="269"/>
    </location>
</feature>
<feature type="domain" description="RNase H type-2" evidence="2">
    <location>
        <begin position="61"/>
        <end position="250"/>
    </location>
</feature>
<feature type="binding site" evidence="1">
    <location>
        <position position="67"/>
    </location>
    <ligand>
        <name>a divalent metal cation</name>
        <dbReference type="ChEBI" id="CHEBI:60240"/>
    </ligand>
</feature>
<feature type="binding site" evidence="1">
    <location>
        <position position="68"/>
    </location>
    <ligand>
        <name>a divalent metal cation</name>
        <dbReference type="ChEBI" id="CHEBI:60240"/>
    </ligand>
</feature>
<feature type="binding site" evidence="1">
    <location>
        <position position="158"/>
    </location>
    <ligand>
        <name>a divalent metal cation</name>
        <dbReference type="ChEBI" id="CHEBI:60240"/>
    </ligand>
</feature>